<protein>
    <recommendedName>
        <fullName>GTPase KRas</fullName>
        <ecNumber evidence="1">3.6.5.2</ecNumber>
    </recommendedName>
    <alternativeName>
        <fullName>K-Ras 2</fullName>
    </alternativeName>
    <alternativeName>
        <fullName>Ki-Ras</fullName>
        <shortName>K-ras</shortName>
    </alternativeName>
</protein>
<keyword id="KW-0002">3D-structure</keyword>
<keyword id="KW-1003">Cell membrane</keyword>
<keyword id="KW-0963">Cytoplasm</keyword>
<keyword id="KW-0342">GTP-binding</keyword>
<keyword id="KW-0378">Hydrolase</keyword>
<keyword id="KW-0449">Lipoprotein</keyword>
<keyword id="KW-0472">Membrane</keyword>
<keyword id="KW-0488">Methylation</keyword>
<keyword id="KW-0547">Nucleotide-binding</keyword>
<keyword id="KW-0636">Prenylation</keyword>
<keyword id="KW-1185">Reference proteome</keyword>
<comment type="function">
    <text evidence="1">Ras proteins bind GDP/GTP and possess intrinsic GTPase activity. Plays an important role in the regulation of cell proliferation. May play a role in promoting oncogenic events by inducing transcriptional silencing of tumor suppressor genes (TSGs).</text>
</comment>
<comment type="catalytic activity">
    <reaction evidence="1">
        <text>GTP + H2O = GDP + phosphate + H(+)</text>
        <dbReference type="Rhea" id="RHEA:19669"/>
        <dbReference type="ChEBI" id="CHEBI:15377"/>
        <dbReference type="ChEBI" id="CHEBI:15378"/>
        <dbReference type="ChEBI" id="CHEBI:37565"/>
        <dbReference type="ChEBI" id="CHEBI:43474"/>
        <dbReference type="ChEBI" id="CHEBI:58189"/>
        <dbReference type="EC" id="3.6.5.2"/>
    </reaction>
</comment>
<comment type="activity regulation">
    <text evidence="1">Alternates between an inactive form bound to GDP and an active form bound to GTP (By similarity). Activated by a guanine nucleotide-exchange factor (GEF) and inactivated by a GTPase-activating protein (GAP) (By similarity).</text>
</comment>
<comment type="subcellular location">
    <subcellularLocation>
        <location evidence="1">Cell membrane</location>
        <topology evidence="1">Lipid-anchor</topology>
        <orientation evidence="1">Cytoplasmic side</orientation>
    </subcellularLocation>
    <subcellularLocation>
        <location evidence="1">Cytoplasm</location>
    </subcellularLocation>
</comment>
<comment type="similarity">
    <text evidence="3">Belongs to the small GTPase superfamily. Ras family.</text>
</comment>
<gene>
    <name type="primary">KRAS</name>
</gene>
<accession>P79800</accession>
<organism>
    <name type="scientific">Meleagris gallopavo</name>
    <name type="common">Wild turkey</name>
    <dbReference type="NCBI Taxonomy" id="9103"/>
    <lineage>
        <taxon>Eukaryota</taxon>
        <taxon>Metazoa</taxon>
        <taxon>Chordata</taxon>
        <taxon>Craniata</taxon>
        <taxon>Vertebrata</taxon>
        <taxon>Euteleostomi</taxon>
        <taxon>Archelosauria</taxon>
        <taxon>Archosauria</taxon>
        <taxon>Dinosauria</taxon>
        <taxon>Saurischia</taxon>
        <taxon>Theropoda</taxon>
        <taxon>Coelurosauria</taxon>
        <taxon>Aves</taxon>
        <taxon>Neognathae</taxon>
        <taxon>Galloanserae</taxon>
        <taxon>Galliformes</taxon>
        <taxon>Phasianidae</taxon>
        <taxon>Meleagridinae</taxon>
        <taxon>Meleagris</taxon>
    </lineage>
</organism>
<feature type="chain" id="PRO_0000082645" description="GTPase KRas">
    <location>
        <begin position="1"/>
        <end position="185"/>
    </location>
</feature>
<feature type="propeptide" id="PRO_0000281295" description="Removed in mature form" evidence="1">
    <location>
        <begin position="186"/>
        <end position="188"/>
    </location>
</feature>
<feature type="region of interest" description="Disordered" evidence="2">
    <location>
        <begin position="168"/>
        <end position="188"/>
    </location>
</feature>
<feature type="short sequence motif" description="Effector region">
    <location>
        <begin position="32"/>
        <end position="40"/>
    </location>
</feature>
<feature type="binding site" evidence="1">
    <location>
        <begin position="10"/>
        <end position="18"/>
    </location>
    <ligand>
        <name>GTP</name>
        <dbReference type="ChEBI" id="CHEBI:37565"/>
    </ligand>
</feature>
<feature type="binding site" evidence="1">
    <location>
        <begin position="29"/>
        <end position="35"/>
    </location>
    <ligand>
        <name>GTP</name>
        <dbReference type="ChEBI" id="CHEBI:37565"/>
    </ligand>
</feature>
<feature type="binding site" evidence="1">
    <location>
        <begin position="59"/>
        <end position="60"/>
    </location>
    <ligand>
        <name>GTP</name>
        <dbReference type="ChEBI" id="CHEBI:37565"/>
    </ligand>
</feature>
<feature type="binding site" evidence="1">
    <location>
        <begin position="116"/>
        <end position="119"/>
    </location>
    <ligand>
        <name>GTP</name>
        <dbReference type="ChEBI" id="CHEBI:37565"/>
    </ligand>
</feature>
<feature type="modified residue" description="Cysteine methyl ester" evidence="1">
    <location>
        <position position="185"/>
    </location>
</feature>
<feature type="lipid moiety-binding region" description="S-farnesyl cysteine" evidence="1">
    <location>
        <position position="185"/>
    </location>
</feature>
<feature type="strand" evidence="4">
    <location>
        <begin position="3"/>
        <end position="11"/>
    </location>
</feature>
<feature type="helix" evidence="4">
    <location>
        <begin position="16"/>
        <end position="25"/>
    </location>
</feature>
<feature type="strand" evidence="4">
    <location>
        <begin position="36"/>
        <end position="46"/>
    </location>
</feature>
<feature type="strand" evidence="4">
    <location>
        <begin position="49"/>
        <end position="58"/>
    </location>
</feature>
<feature type="helix" evidence="4">
    <location>
        <begin position="62"/>
        <end position="67"/>
    </location>
</feature>
<feature type="helix" evidence="4">
    <location>
        <begin position="69"/>
        <end position="74"/>
    </location>
</feature>
<feature type="strand" evidence="4">
    <location>
        <begin position="76"/>
        <end position="83"/>
    </location>
</feature>
<feature type="helix" evidence="4">
    <location>
        <begin position="87"/>
        <end position="104"/>
    </location>
</feature>
<feature type="strand" evidence="4">
    <location>
        <begin position="111"/>
        <end position="116"/>
    </location>
</feature>
<feature type="helix" evidence="4">
    <location>
        <begin position="127"/>
        <end position="137"/>
    </location>
</feature>
<feature type="strand" evidence="4">
    <location>
        <begin position="141"/>
        <end position="143"/>
    </location>
</feature>
<feature type="turn" evidence="4">
    <location>
        <begin position="146"/>
        <end position="148"/>
    </location>
</feature>
<feature type="helix" evidence="4">
    <location>
        <begin position="152"/>
        <end position="167"/>
    </location>
</feature>
<proteinExistence type="evidence at protein level"/>
<evidence type="ECO:0000250" key="1">
    <source>
        <dbReference type="UniProtKB" id="P01116"/>
    </source>
</evidence>
<evidence type="ECO:0000256" key="2">
    <source>
        <dbReference type="SAM" id="MobiDB-lite"/>
    </source>
</evidence>
<evidence type="ECO:0000305" key="3"/>
<evidence type="ECO:0007829" key="4">
    <source>
        <dbReference type="PDB" id="9BGH"/>
    </source>
</evidence>
<name>RASK_MELGA</name>
<sequence length="188" mass="21453">MTEYKLVVVGAGGVGKSALTIQLIQNHFVDEYDPTIEDSYRKQVVIDGETCLLDILDTAGQEEYSAMRDQYMRTGEGFLCVFAINNTKSFEDIHHYREQIKRVKDSEDVPMVLVGNKCDLPSRTVDTKQAQDLARSYGIPFIETSAKTRQGVDDAFYTLVREIRKHKEKMSKDGKKKKKKTKTKCIIM</sequence>
<reference key="1">
    <citation type="journal article" date="1996" name="Gene">
        <title>The turkey c-rap1A proto-oncogene is expressed via two distinct promoters.</title>
        <authorList>
            <person name="Chajut A."/>
            <person name="Gazit A."/>
            <person name="Yaniv A."/>
        </authorList>
    </citation>
    <scope>NUCLEOTIDE SEQUENCE [MRNA]</scope>
    <source>
        <tissue>Spleen</tissue>
    </source>
</reference>
<dbReference type="EC" id="3.6.5.2" evidence="1"/>
<dbReference type="EMBL" id="X85754">
    <property type="protein sequence ID" value="CAA59755.1"/>
    <property type="molecule type" value="mRNA"/>
</dbReference>
<dbReference type="PIR" id="JC5154">
    <property type="entry name" value="JC5154"/>
</dbReference>
<dbReference type="RefSeq" id="NP_001290152.1">
    <property type="nucleotide sequence ID" value="NM_001303223.1"/>
</dbReference>
<dbReference type="PDB" id="6XI7">
    <property type="method" value="X-ray"/>
    <property type="resolution" value="1.95 A"/>
    <property type="chains" value="A=1-169"/>
</dbReference>
<dbReference type="PDB" id="9BGH">
    <property type="method" value="X-ray"/>
    <property type="resolution" value="1.65 A"/>
    <property type="chains" value="A/C=1-169"/>
</dbReference>
<dbReference type="PDBsum" id="6XI7"/>
<dbReference type="PDBsum" id="9BGH"/>
<dbReference type="BMRB" id="P79800"/>
<dbReference type="SMR" id="P79800"/>
<dbReference type="Ensembl" id="ENSMGAT00000020086.2">
    <property type="protein sequence ID" value="ENSMGAP00000017540.1"/>
    <property type="gene ID" value="ENSMGAG00000013673.3"/>
</dbReference>
<dbReference type="GeneID" id="100151750"/>
<dbReference type="KEGG" id="mgp:100151750"/>
<dbReference type="CTD" id="3845"/>
<dbReference type="GeneTree" id="ENSGT00940000155871"/>
<dbReference type="HOGENOM" id="CLU_041217_9_8_1"/>
<dbReference type="InParanoid" id="P79800"/>
<dbReference type="OMA" id="CCGGCVI"/>
<dbReference type="OrthoDB" id="5976022at2759"/>
<dbReference type="Proteomes" id="UP000001645">
    <property type="component" value="Chromosome 1"/>
</dbReference>
<dbReference type="Bgee" id="ENSMGAG00000013673">
    <property type="expression patterns" value="Expressed in ileum and 17 other cell types or tissues"/>
</dbReference>
<dbReference type="GO" id="GO:0005737">
    <property type="term" value="C:cytoplasm"/>
    <property type="evidence" value="ECO:0000250"/>
    <property type="project" value="UniProtKB"/>
</dbReference>
<dbReference type="GO" id="GO:0009898">
    <property type="term" value="C:cytoplasmic side of plasma membrane"/>
    <property type="evidence" value="ECO:0000250"/>
    <property type="project" value="UniProtKB"/>
</dbReference>
<dbReference type="GO" id="GO:0003925">
    <property type="term" value="F:G protein activity"/>
    <property type="evidence" value="ECO:0007669"/>
    <property type="project" value="UniProtKB-EC"/>
</dbReference>
<dbReference type="GO" id="GO:0005525">
    <property type="term" value="F:GTP binding"/>
    <property type="evidence" value="ECO:0007669"/>
    <property type="project" value="UniProtKB-KW"/>
</dbReference>
<dbReference type="GO" id="GO:0007165">
    <property type="term" value="P:signal transduction"/>
    <property type="evidence" value="ECO:0007669"/>
    <property type="project" value="InterPro"/>
</dbReference>
<dbReference type="CDD" id="cd04138">
    <property type="entry name" value="H_N_K_Ras_like"/>
    <property type="match status" value="1"/>
</dbReference>
<dbReference type="FunFam" id="3.40.50.300:FF:000096">
    <property type="entry name" value="KRAS proto-oncogene, GTPase"/>
    <property type="match status" value="1"/>
</dbReference>
<dbReference type="Gene3D" id="3.40.50.300">
    <property type="entry name" value="P-loop containing nucleotide triphosphate hydrolases"/>
    <property type="match status" value="1"/>
</dbReference>
<dbReference type="InterPro" id="IPR027417">
    <property type="entry name" value="P-loop_NTPase"/>
</dbReference>
<dbReference type="InterPro" id="IPR005225">
    <property type="entry name" value="Small_GTP-bd"/>
</dbReference>
<dbReference type="InterPro" id="IPR001806">
    <property type="entry name" value="Small_GTPase"/>
</dbReference>
<dbReference type="InterPro" id="IPR020849">
    <property type="entry name" value="Small_GTPase_Ras-type"/>
</dbReference>
<dbReference type="NCBIfam" id="TIGR00231">
    <property type="entry name" value="small_GTP"/>
    <property type="match status" value="1"/>
</dbReference>
<dbReference type="PANTHER" id="PTHR24070">
    <property type="entry name" value="RAS, DI-RAS, AND RHEB FAMILY MEMBERS OF SMALL GTPASE SUPERFAMILY"/>
    <property type="match status" value="1"/>
</dbReference>
<dbReference type="Pfam" id="PF00071">
    <property type="entry name" value="Ras"/>
    <property type="match status" value="1"/>
</dbReference>
<dbReference type="PRINTS" id="PR00449">
    <property type="entry name" value="RASTRNSFRMNG"/>
</dbReference>
<dbReference type="SMART" id="SM00175">
    <property type="entry name" value="RAB"/>
    <property type="match status" value="1"/>
</dbReference>
<dbReference type="SMART" id="SM00173">
    <property type="entry name" value="RAS"/>
    <property type="match status" value="1"/>
</dbReference>
<dbReference type="SMART" id="SM00174">
    <property type="entry name" value="RHO"/>
    <property type="match status" value="1"/>
</dbReference>
<dbReference type="SUPFAM" id="SSF52540">
    <property type="entry name" value="P-loop containing nucleoside triphosphate hydrolases"/>
    <property type="match status" value="1"/>
</dbReference>
<dbReference type="PROSITE" id="PS51421">
    <property type="entry name" value="RAS"/>
    <property type="match status" value="1"/>
</dbReference>